<evidence type="ECO:0000269" key="1">
    <source>
    </source>
</evidence>
<evidence type="ECO:0000303" key="2">
    <source>
    </source>
</evidence>
<evidence type="ECO:0000305" key="3"/>
<feature type="chain" id="PRO_0000442709" description="Protein YnfQ">
    <location>
        <begin position="1"/>
        <end position="62"/>
    </location>
</feature>
<protein>
    <recommendedName>
        <fullName evidence="2">Protein YnfQ</fullName>
    </recommendedName>
</protein>
<sequence length="62" mass="7141">MTNHIHFRCPCCHGSQYRTSSFDVSDMNPFGAKCIFCKSMMITFDNISQYLNASRLSLDLKK</sequence>
<reference key="1">
    <citation type="journal article" date="1997" name="Science">
        <title>The complete genome sequence of Escherichia coli K-12.</title>
        <authorList>
            <person name="Blattner F.R."/>
            <person name="Plunkett G. III"/>
            <person name="Bloch C.A."/>
            <person name="Perna N.T."/>
            <person name="Burland V."/>
            <person name="Riley M."/>
            <person name="Collado-Vides J."/>
            <person name="Glasner J.D."/>
            <person name="Rode C.K."/>
            <person name="Mayhew G.F."/>
            <person name="Gregor J."/>
            <person name="Davis N.W."/>
            <person name="Kirkpatrick H.A."/>
            <person name="Goeden M.A."/>
            <person name="Rose D.J."/>
            <person name="Mau B."/>
            <person name="Shao Y."/>
        </authorList>
    </citation>
    <scope>NUCLEOTIDE SEQUENCE [LARGE SCALE GENOMIC DNA]</scope>
    <source>
        <strain>K12 / MG1655 / ATCC 47076</strain>
    </source>
</reference>
<reference key="2">
    <citation type="journal article" date="2017" name="J. Proteome Res.">
        <title>Comparative proteomics enables identification of nonannotated cold shock proteins in E. coli.</title>
        <authorList>
            <person name="D'Lima N.G."/>
            <person name="Khitun A."/>
            <person name="Rosenbloom A.D."/>
            <person name="Yuan P."/>
            <person name="Gassaway B.M."/>
            <person name="Barber K.W."/>
            <person name="Rinehart J."/>
            <person name="Slavoff S.A."/>
        </authorList>
    </citation>
    <scope>IDENTIFICATION</scope>
    <scope>INDUCTION BY COLD SHOCK</scope>
    <source>
        <strain>K12 / MG1655 / ATCC 47076</strain>
    </source>
</reference>
<proteinExistence type="evidence at protein level"/>
<organism>
    <name type="scientific">Escherichia coli (strain K12)</name>
    <dbReference type="NCBI Taxonomy" id="83333"/>
    <lineage>
        <taxon>Bacteria</taxon>
        <taxon>Pseudomonadati</taxon>
        <taxon>Pseudomonadota</taxon>
        <taxon>Gammaproteobacteria</taxon>
        <taxon>Enterobacterales</taxon>
        <taxon>Enterobacteriaceae</taxon>
        <taxon>Escherichia</taxon>
    </lineage>
</organism>
<name>YNFQ_ECOLI</name>
<gene>
    <name evidence="2" type="primary">ynfQ</name>
    <name type="ordered locus">b4724</name>
</gene>
<accession>P0DPC9</accession>
<accession>A0A385XJI0</accession>
<comment type="induction">
    <text evidence="1">By cold shock, 10 degrees Celsius (at protein level).</text>
</comment>
<comment type="miscellaneous">
    <text evidence="1 3">Probably uses the non-canonical initiation codon AUU, which may limit its expression (PubMed:28861998). Part of the Qin prophage (Probable).</text>
</comment>
<comment type="similarity">
    <text evidence="3">Belongs to the YmcF/YnqF peptide family.</text>
</comment>
<dbReference type="EMBL" id="U00096">
    <property type="protein sequence ID" value="AYC08218.1"/>
    <property type="molecule type" value="Genomic_DNA"/>
</dbReference>
<dbReference type="RefSeq" id="WP_071524604.1">
    <property type="nucleotide sequence ID" value="NZ_SSUV01000066.1"/>
</dbReference>
<dbReference type="EnsemblBacteria" id="AYC08218">
    <property type="protein sequence ID" value="AYC08218"/>
    <property type="gene ID" value="b4724"/>
</dbReference>
<dbReference type="InParanoid" id="P0DPC9"/>
<dbReference type="OrthoDB" id="6562785at2"/>
<dbReference type="BioCyc" id="EcoCyc:MONOMER0-4394"/>
<dbReference type="PRO" id="PR:P0DPC9"/>
<dbReference type="Proteomes" id="UP000000625">
    <property type="component" value="Chromosome"/>
</dbReference>
<dbReference type="InterPro" id="IPR056946">
    <property type="entry name" value="YmcF-like"/>
</dbReference>
<dbReference type="Pfam" id="PF23641">
    <property type="entry name" value="YmcF-like"/>
    <property type="match status" value="1"/>
</dbReference>
<keyword id="KW-1185">Reference proteome</keyword>